<feature type="chain" id="PRO_0000122958" description="Recombination and repair protein">
    <location>
        <begin position="1"/>
        <end position="391"/>
    </location>
</feature>
<feature type="region of interest" description="Disordered" evidence="2">
    <location>
        <begin position="364"/>
        <end position="391"/>
    </location>
</feature>
<feature type="compositionally biased region" description="Basic and acidic residues" evidence="2">
    <location>
        <begin position="364"/>
        <end position="374"/>
    </location>
</feature>
<feature type="compositionally biased region" description="Acidic residues" evidence="2">
    <location>
        <begin position="376"/>
        <end position="391"/>
    </location>
</feature>
<feature type="binding site" evidence="1">
    <location>
        <begin position="60"/>
        <end position="67"/>
    </location>
    <ligand>
        <name>ATP</name>
        <dbReference type="ChEBI" id="CHEBI:30616"/>
    </ligand>
</feature>
<feature type="sequence conflict" description="In Ref. 1; CAB40822/AAA32552." evidence="3" ref="1">
    <original>GPLF</original>
    <variation>VLI</variation>
    <location>
        <begin position="321"/>
        <end position="324"/>
    </location>
</feature>
<feature type="helix" evidence="4">
    <location>
        <begin position="37"/>
        <end position="44"/>
    </location>
</feature>
<feature type="strand" evidence="4">
    <location>
        <begin position="53"/>
        <end position="65"/>
    </location>
</feature>
<feature type="helix" evidence="4">
    <location>
        <begin position="66"/>
        <end position="80"/>
    </location>
</feature>
<feature type="strand" evidence="4">
    <location>
        <begin position="85"/>
        <end position="92"/>
    </location>
</feature>
<feature type="helix" evidence="4">
    <location>
        <begin position="97"/>
        <end position="102"/>
    </location>
</feature>
<feature type="helix" evidence="4">
    <location>
        <begin position="107"/>
        <end position="109"/>
    </location>
</feature>
<feature type="strand" evidence="4">
    <location>
        <begin position="110"/>
        <end position="114"/>
    </location>
</feature>
<feature type="helix" evidence="4">
    <location>
        <begin position="118"/>
        <end position="130"/>
    </location>
</feature>
<feature type="strand" evidence="4">
    <location>
        <begin position="138"/>
        <end position="143"/>
    </location>
</feature>
<feature type="helix" evidence="4">
    <location>
        <begin position="168"/>
        <end position="185"/>
    </location>
</feature>
<feature type="strand" evidence="4">
    <location>
        <begin position="189"/>
        <end position="195"/>
    </location>
</feature>
<feature type="helix" evidence="4">
    <location>
        <begin position="214"/>
        <end position="217"/>
    </location>
</feature>
<feature type="strand" evidence="4">
    <location>
        <begin position="218"/>
        <end position="226"/>
    </location>
</feature>
<feature type="strand" evidence="4">
    <location>
        <begin position="239"/>
        <end position="246"/>
    </location>
</feature>
<feature type="strand" evidence="4">
    <location>
        <begin position="248"/>
        <end position="250"/>
    </location>
</feature>
<feature type="strand" evidence="4">
    <location>
        <begin position="255"/>
        <end position="260"/>
    </location>
</feature>
<feature type="turn" evidence="4">
    <location>
        <begin position="268"/>
        <end position="271"/>
    </location>
</feature>
<feature type="helix" evidence="4">
    <location>
        <begin position="272"/>
        <end position="278"/>
    </location>
</feature>
<feature type="strand" evidence="4">
    <location>
        <begin position="281"/>
        <end position="283"/>
    </location>
</feature>
<feature type="strand" evidence="4">
    <location>
        <begin position="289"/>
        <end position="295"/>
    </location>
</feature>
<feature type="turn" evidence="4">
    <location>
        <begin position="297"/>
        <end position="299"/>
    </location>
</feature>
<feature type="strand" evidence="4">
    <location>
        <begin position="302"/>
        <end position="304"/>
    </location>
</feature>
<feature type="helix" evidence="4">
    <location>
        <begin position="311"/>
        <end position="314"/>
    </location>
</feature>
<feature type="helix" evidence="4">
    <location>
        <begin position="317"/>
        <end position="324"/>
    </location>
</feature>
<feature type="helix" evidence="4">
    <location>
        <begin position="327"/>
        <end position="337"/>
    </location>
</feature>
<protein>
    <recommendedName>
        <fullName>Recombination and repair protein</fullName>
    </recommendedName>
</protein>
<organism>
    <name type="scientific">Enterobacteria phage T4</name>
    <name type="common">Bacteriophage T4</name>
    <dbReference type="NCBI Taxonomy" id="10665"/>
    <lineage>
        <taxon>Viruses</taxon>
        <taxon>Duplodnaviria</taxon>
        <taxon>Heunggongvirae</taxon>
        <taxon>Uroviricota</taxon>
        <taxon>Caudoviricetes</taxon>
        <taxon>Straboviridae</taxon>
        <taxon>Tevenvirinae</taxon>
        <taxon>Tequatrovirus</taxon>
    </lineage>
</organism>
<gene>
    <name type="primary">UVSX</name>
</gene>
<accession>P04529</accession>
<accession>Q9MBK8</accession>
<reference key="1">
    <citation type="journal article" date="1985" name="Nucleic Acids Res.">
        <title>Sequence of the T4 recombination gene, uvsX, and its comparison with that of the recA gene of Escherichia coli.</title>
        <authorList>
            <person name="Fujisawa H."/>
            <person name="Yonesaki T."/>
            <person name="Minagawa T."/>
        </authorList>
    </citation>
    <scope>NUCLEOTIDE SEQUENCE [GENOMIC DNA]</scope>
</reference>
<reference key="2">
    <citation type="journal article" date="2003" name="Microbiol. Mol. Biol. Rev.">
        <title>Bacteriophage T4 genome.</title>
        <authorList>
            <person name="Miller E.S."/>
            <person name="Kutter E."/>
            <person name="Mosig G."/>
            <person name="Arisaka F."/>
            <person name="Kunisawa T."/>
            <person name="Ruger W."/>
        </authorList>
    </citation>
    <scope>NUCLEOTIDE SEQUENCE [LARGE SCALE GENOMIC DNA]</scope>
</reference>
<reference key="3">
    <citation type="journal article" date="1989" name="J. Biol. Chem.">
        <title>Altered expression of the bacteriophage T4 gene 41 (primase-helicase) in an Escherichia coli rho mutant.</title>
        <authorList>
            <person name="Hinton D.M."/>
        </authorList>
    </citation>
    <scope>NUCLEOTIDE SEQUENCE [GENOMIC DNA] OF 362-391</scope>
</reference>
<sequence>MSDLKSRLIKASTSKLTAELTASKFFNEKDVVRTKIPMMNIALSGEITGGMQSGLLILAGPSKSFKSNFGLTMVSSYMRQYPDAVCLFYDSEFGITPAYLRSMGVDPERVIHTPVQSLEQLRIDMVNQLDAIERGEKVVVFIDSLGNLASKKETEDALNEKVVSDMTRAKTMKSLFRIVTPYFSTKNIPCIAINHTYETQEMFSKTVMGGGTGPMYSADTVFIIGKRQIKDGSDLQGYQFVLNVEKSRTVKEKSKFFIDVKFDGGIDPYSGLLDMALELGFVVKPKNGWYAREFLDEETGEMIREEKSWRAKDTNCTTFWGPLFKHQPFRDAIKRAYQLGAIDSNEIVEAEVDELINSKVEKFKSPESKSKSAADLETDLEQLSDMEEFNE</sequence>
<dbReference type="EMBL" id="X03099">
    <property type="protein sequence ID" value="CAB40822.1"/>
    <property type="molecule type" value="Genomic_DNA"/>
</dbReference>
<dbReference type="EMBL" id="AF158101">
    <property type="protein sequence ID" value="AAD42669.2"/>
    <property type="molecule type" value="Genomic_DNA"/>
</dbReference>
<dbReference type="EMBL" id="J04978">
    <property type="protein sequence ID" value="AAA32523.1"/>
    <property type="molecule type" value="Genomic_DNA"/>
</dbReference>
<dbReference type="EMBL" id="K03113">
    <property type="protein sequence ID" value="AAA32552.1"/>
    <property type="molecule type" value="Genomic_DNA"/>
</dbReference>
<dbReference type="PIR" id="A04307">
    <property type="entry name" value="RRBPT4"/>
</dbReference>
<dbReference type="RefSeq" id="NP_049656.2">
    <property type="nucleotide sequence ID" value="NC_000866.4"/>
</dbReference>
<dbReference type="PDB" id="3IO5">
    <property type="method" value="X-ray"/>
    <property type="resolution" value="2.40 A"/>
    <property type="chains" value="A/B=30-358"/>
</dbReference>
<dbReference type="PDBsum" id="3IO5"/>
<dbReference type="SMR" id="P04529"/>
<dbReference type="GeneID" id="1258704"/>
<dbReference type="KEGG" id="vg:1258704"/>
<dbReference type="OrthoDB" id="3344at10239"/>
<dbReference type="EvolutionaryTrace" id="P04529"/>
<dbReference type="Proteomes" id="UP000009087">
    <property type="component" value="Segment"/>
</dbReference>
<dbReference type="GO" id="GO:0005524">
    <property type="term" value="F:ATP binding"/>
    <property type="evidence" value="ECO:0007669"/>
    <property type="project" value="UniProtKB-KW"/>
</dbReference>
<dbReference type="GO" id="GO:0140664">
    <property type="term" value="F:ATP-dependent DNA damage sensor activity"/>
    <property type="evidence" value="ECO:0007669"/>
    <property type="project" value="InterPro"/>
</dbReference>
<dbReference type="GO" id="GO:0003697">
    <property type="term" value="F:single-stranded DNA binding"/>
    <property type="evidence" value="ECO:0007669"/>
    <property type="project" value="InterPro"/>
</dbReference>
<dbReference type="GO" id="GO:0006310">
    <property type="term" value="P:DNA recombination"/>
    <property type="evidence" value="ECO:0007669"/>
    <property type="project" value="UniProtKB-KW"/>
</dbReference>
<dbReference type="GO" id="GO:0006281">
    <property type="term" value="P:DNA repair"/>
    <property type="evidence" value="ECO:0007669"/>
    <property type="project" value="UniProtKB-KW"/>
</dbReference>
<dbReference type="GO" id="GO:0006260">
    <property type="term" value="P:DNA replication"/>
    <property type="evidence" value="ECO:0007669"/>
    <property type="project" value="UniProtKB-KW"/>
</dbReference>
<dbReference type="Gene3D" id="3.40.50.300">
    <property type="entry name" value="P-loop containing nucleotide triphosphate hydrolases"/>
    <property type="match status" value="1"/>
</dbReference>
<dbReference type="InterPro" id="IPR013765">
    <property type="entry name" value="DNA_recomb/repair_RecA"/>
</dbReference>
<dbReference type="InterPro" id="IPR027417">
    <property type="entry name" value="P-loop_NTPase"/>
</dbReference>
<dbReference type="InterPro" id="IPR049428">
    <property type="entry name" value="RecA-like_N"/>
</dbReference>
<dbReference type="InterPro" id="IPR020588">
    <property type="entry name" value="RecA_ATP-bd"/>
</dbReference>
<dbReference type="InterPro" id="IPR020587">
    <property type="entry name" value="RecA_monomer-monomer_interface"/>
</dbReference>
<dbReference type="InterPro" id="IPR049047">
    <property type="entry name" value="T4_UVSX-like_C"/>
</dbReference>
<dbReference type="PANTHER" id="PTHR45900:SF1">
    <property type="entry name" value="MITOCHONDRIAL DNA REPAIR PROTEIN RECA HOMOLOG-RELATED"/>
    <property type="match status" value="1"/>
</dbReference>
<dbReference type="PANTHER" id="PTHR45900">
    <property type="entry name" value="RECA"/>
    <property type="match status" value="1"/>
</dbReference>
<dbReference type="Pfam" id="PF00154">
    <property type="entry name" value="RecA"/>
    <property type="match status" value="1"/>
</dbReference>
<dbReference type="Pfam" id="PF21134">
    <property type="entry name" value="T4_UVSX_C"/>
    <property type="match status" value="1"/>
</dbReference>
<dbReference type="SUPFAM" id="SSF52540">
    <property type="entry name" value="P-loop containing nucleoside triphosphate hydrolases"/>
    <property type="match status" value="1"/>
</dbReference>
<dbReference type="PROSITE" id="PS50162">
    <property type="entry name" value="RECA_2"/>
    <property type="match status" value="1"/>
</dbReference>
<dbReference type="PROSITE" id="PS50163">
    <property type="entry name" value="RECA_3"/>
    <property type="match status" value="1"/>
</dbReference>
<proteinExistence type="evidence at protein level"/>
<evidence type="ECO:0000255" key="1"/>
<evidence type="ECO:0000256" key="2">
    <source>
        <dbReference type="SAM" id="MobiDB-lite"/>
    </source>
</evidence>
<evidence type="ECO:0000305" key="3"/>
<evidence type="ECO:0007829" key="4">
    <source>
        <dbReference type="PDB" id="3IO5"/>
    </source>
</evidence>
<name>UVSX_BPT4</name>
<comment type="function">
    <text>Important in genetic recombination, DNA repair, and replication. Possesses pairing and strand-transfer activity. Interacts with dda and gene 32 proteins.</text>
</comment>
<comment type="similarity">
    <text evidence="3">Belongs to the RecA family.</text>
</comment>
<keyword id="KW-0002">3D-structure</keyword>
<keyword id="KW-0067">ATP-binding</keyword>
<keyword id="KW-0227">DNA damage</keyword>
<keyword id="KW-0233">DNA recombination</keyword>
<keyword id="KW-0234">DNA repair</keyword>
<keyword id="KW-0235">DNA replication</keyword>
<keyword id="KW-0547">Nucleotide-binding</keyword>
<keyword id="KW-1185">Reference proteome</keyword>
<organismHost>
    <name type="scientific">Escherichia coli</name>
    <dbReference type="NCBI Taxonomy" id="562"/>
</organismHost>